<organism>
    <name type="scientific">Salmonella agona (strain SL483)</name>
    <dbReference type="NCBI Taxonomy" id="454166"/>
    <lineage>
        <taxon>Bacteria</taxon>
        <taxon>Pseudomonadati</taxon>
        <taxon>Pseudomonadota</taxon>
        <taxon>Gammaproteobacteria</taxon>
        <taxon>Enterobacterales</taxon>
        <taxon>Enterobacteriaceae</taxon>
        <taxon>Salmonella</taxon>
    </lineage>
</organism>
<evidence type="ECO:0000255" key="1">
    <source>
        <dbReference type="HAMAP-Rule" id="MF_00472"/>
    </source>
</evidence>
<keyword id="KW-0489">Methyltransferase</keyword>
<keyword id="KW-0949">S-adenosyl-L-methionine</keyword>
<keyword id="KW-0808">Transferase</keyword>
<keyword id="KW-0831">Ubiquinone biosynthesis</keyword>
<sequence length="242" mass="26854">MNTEKPSVAHNVDHNEIAKFEAVASRWWDLEGEFKPLHRINPLRLGYITERSGGLFGKKVLDVGCGGGILAESMAREGATVTGLDMGFEPLQVAKLHALESGIEVEYVQETVEEHAAKHAQQYDVVTCMEMLEHVPDPQSVVHACAQLVKPGGEVFFSTLNRNGKSWLMAVVGAEYILRMVPKGTHDVKKFIKPAELLSWVDETVLKEQHITGLHYNPITNTFKLGPGVDVNYMLHTRAKKA</sequence>
<accession>B5EYW1</accession>
<protein>
    <recommendedName>
        <fullName evidence="1">Ubiquinone biosynthesis O-methyltransferase</fullName>
    </recommendedName>
    <alternativeName>
        <fullName evidence="1">2-polyprenyl-6-hydroxyphenol methylase</fullName>
        <ecNumber evidence="1">2.1.1.222</ecNumber>
    </alternativeName>
    <alternativeName>
        <fullName evidence="1">3-demethylubiquinone 3-O-methyltransferase</fullName>
        <ecNumber evidence="1">2.1.1.64</ecNumber>
    </alternativeName>
</protein>
<dbReference type="EC" id="2.1.1.222" evidence="1"/>
<dbReference type="EC" id="2.1.1.64" evidence="1"/>
<dbReference type="EMBL" id="CP001138">
    <property type="protein sequence ID" value="ACH49197.1"/>
    <property type="molecule type" value="Genomic_DNA"/>
</dbReference>
<dbReference type="RefSeq" id="WP_001091009.1">
    <property type="nucleotide sequence ID" value="NC_011149.1"/>
</dbReference>
<dbReference type="SMR" id="B5EYW1"/>
<dbReference type="KEGG" id="sea:SeAg_B2412"/>
<dbReference type="HOGENOM" id="CLU_042432_5_0_6"/>
<dbReference type="UniPathway" id="UPA00232"/>
<dbReference type="Proteomes" id="UP000008819">
    <property type="component" value="Chromosome"/>
</dbReference>
<dbReference type="GO" id="GO:0102208">
    <property type="term" value="F:2-polyprenyl-6-hydroxyphenol methylase activity"/>
    <property type="evidence" value="ECO:0007669"/>
    <property type="project" value="UniProtKB-EC"/>
</dbReference>
<dbReference type="GO" id="GO:0061542">
    <property type="term" value="F:3-demethylubiquinol 3-O-methyltransferase activity"/>
    <property type="evidence" value="ECO:0007669"/>
    <property type="project" value="UniProtKB-UniRule"/>
</dbReference>
<dbReference type="GO" id="GO:0010420">
    <property type="term" value="F:polyprenyldihydroxybenzoate methyltransferase activity"/>
    <property type="evidence" value="ECO:0007669"/>
    <property type="project" value="InterPro"/>
</dbReference>
<dbReference type="GO" id="GO:0032259">
    <property type="term" value="P:methylation"/>
    <property type="evidence" value="ECO:0007669"/>
    <property type="project" value="UniProtKB-KW"/>
</dbReference>
<dbReference type="CDD" id="cd02440">
    <property type="entry name" value="AdoMet_MTases"/>
    <property type="match status" value="1"/>
</dbReference>
<dbReference type="FunFam" id="3.40.50.150:FF:000028">
    <property type="entry name" value="Ubiquinone biosynthesis O-methyltransferase"/>
    <property type="match status" value="1"/>
</dbReference>
<dbReference type="Gene3D" id="3.40.50.150">
    <property type="entry name" value="Vaccinia Virus protein VP39"/>
    <property type="match status" value="1"/>
</dbReference>
<dbReference type="HAMAP" id="MF_00472">
    <property type="entry name" value="UbiG"/>
    <property type="match status" value="1"/>
</dbReference>
<dbReference type="InterPro" id="IPR029063">
    <property type="entry name" value="SAM-dependent_MTases_sf"/>
</dbReference>
<dbReference type="InterPro" id="IPR010233">
    <property type="entry name" value="UbiG_MeTrfase"/>
</dbReference>
<dbReference type="NCBIfam" id="TIGR01983">
    <property type="entry name" value="UbiG"/>
    <property type="match status" value="1"/>
</dbReference>
<dbReference type="PANTHER" id="PTHR43464">
    <property type="entry name" value="METHYLTRANSFERASE"/>
    <property type="match status" value="1"/>
</dbReference>
<dbReference type="PANTHER" id="PTHR43464:SF19">
    <property type="entry name" value="UBIQUINONE BIOSYNTHESIS O-METHYLTRANSFERASE, MITOCHONDRIAL"/>
    <property type="match status" value="1"/>
</dbReference>
<dbReference type="Pfam" id="PF13489">
    <property type="entry name" value="Methyltransf_23"/>
    <property type="match status" value="1"/>
</dbReference>
<dbReference type="SUPFAM" id="SSF53335">
    <property type="entry name" value="S-adenosyl-L-methionine-dependent methyltransferases"/>
    <property type="match status" value="1"/>
</dbReference>
<gene>
    <name evidence="1" type="primary">ubiG</name>
    <name type="ordered locus">SeAg_B2412</name>
</gene>
<proteinExistence type="inferred from homology"/>
<comment type="function">
    <text evidence="1">O-methyltransferase that catalyzes the 2 O-methylation steps in the ubiquinone biosynthetic pathway.</text>
</comment>
<comment type="catalytic activity">
    <reaction evidence="1">
        <text>a 3-demethylubiquinol + S-adenosyl-L-methionine = a ubiquinol + S-adenosyl-L-homocysteine + H(+)</text>
        <dbReference type="Rhea" id="RHEA:44380"/>
        <dbReference type="Rhea" id="RHEA-COMP:9566"/>
        <dbReference type="Rhea" id="RHEA-COMP:10914"/>
        <dbReference type="ChEBI" id="CHEBI:15378"/>
        <dbReference type="ChEBI" id="CHEBI:17976"/>
        <dbReference type="ChEBI" id="CHEBI:57856"/>
        <dbReference type="ChEBI" id="CHEBI:59789"/>
        <dbReference type="ChEBI" id="CHEBI:84422"/>
        <dbReference type="EC" id="2.1.1.64"/>
    </reaction>
</comment>
<comment type="catalytic activity">
    <reaction evidence="1">
        <text>a 3-(all-trans-polyprenyl)benzene-1,2-diol + S-adenosyl-L-methionine = a 2-methoxy-6-(all-trans-polyprenyl)phenol + S-adenosyl-L-homocysteine + H(+)</text>
        <dbReference type="Rhea" id="RHEA:31411"/>
        <dbReference type="Rhea" id="RHEA-COMP:9550"/>
        <dbReference type="Rhea" id="RHEA-COMP:9551"/>
        <dbReference type="ChEBI" id="CHEBI:15378"/>
        <dbReference type="ChEBI" id="CHEBI:57856"/>
        <dbReference type="ChEBI" id="CHEBI:59789"/>
        <dbReference type="ChEBI" id="CHEBI:62729"/>
        <dbReference type="ChEBI" id="CHEBI:62731"/>
        <dbReference type="EC" id="2.1.1.222"/>
    </reaction>
</comment>
<comment type="pathway">
    <text evidence="1">Cofactor biosynthesis; ubiquinone biosynthesis.</text>
</comment>
<comment type="similarity">
    <text evidence="1">Belongs to the methyltransferase superfamily. UbiG/COQ3 family.</text>
</comment>
<name>UBIG_SALA4</name>
<feature type="chain" id="PRO_1000199695" description="Ubiquinone biosynthesis O-methyltransferase">
    <location>
        <begin position="1"/>
        <end position="242"/>
    </location>
</feature>
<feature type="binding site" evidence="1">
    <location>
        <position position="44"/>
    </location>
    <ligand>
        <name>S-adenosyl-L-methionine</name>
        <dbReference type="ChEBI" id="CHEBI:59789"/>
    </ligand>
</feature>
<feature type="binding site" evidence="1">
    <location>
        <position position="64"/>
    </location>
    <ligand>
        <name>S-adenosyl-L-methionine</name>
        <dbReference type="ChEBI" id="CHEBI:59789"/>
    </ligand>
</feature>
<feature type="binding site" evidence="1">
    <location>
        <position position="85"/>
    </location>
    <ligand>
        <name>S-adenosyl-L-methionine</name>
        <dbReference type="ChEBI" id="CHEBI:59789"/>
    </ligand>
</feature>
<feature type="binding site" evidence="1">
    <location>
        <position position="129"/>
    </location>
    <ligand>
        <name>S-adenosyl-L-methionine</name>
        <dbReference type="ChEBI" id="CHEBI:59789"/>
    </ligand>
</feature>
<reference key="1">
    <citation type="journal article" date="2011" name="J. Bacteriol.">
        <title>Comparative genomics of 28 Salmonella enterica isolates: evidence for CRISPR-mediated adaptive sublineage evolution.</title>
        <authorList>
            <person name="Fricke W.F."/>
            <person name="Mammel M.K."/>
            <person name="McDermott P.F."/>
            <person name="Tartera C."/>
            <person name="White D.G."/>
            <person name="Leclerc J.E."/>
            <person name="Ravel J."/>
            <person name="Cebula T.A."/>
        </authorList>
    </citation>
    <scope>NUCLEOTIDE SEQUENCE [LARGE SCALE GENOMIC DNA]</scope>
    <source>
        <strain>SL483</strain>
    </source>
</reference>